<accession>Q5J3L7</accession>
<accession>Q62853</accession>
<accession>Q9WUU2</accession>
<sequence>MNKDNTLHVDTIMKITMFSEVSVGILANSILFFAHLCMLLGENKPKPIHLYIASLSLTQLMLLITMGLIAADMFISQGIWDSTSCQSLIYLHRLSRGFTLSAACLLNVFWMITLSSKKSRLTKFKHNSPHHISGAFLLLCVLYMCFSSHLILSIIATPNLTSDNFMYVTKSCSFLPMCYSRTSMFSTTIAVREAFFIGLMALSSGYLVAFLWRHRKQAQHLHSTGLSSKASPEQRATETILLLMSFFVVLYILENVVFYSRMKFKDGSTFYCVQIIVSHSYATVSSFVFIFTEKRMTKILRSVCTRIINI</sequence>
<gene>
    <name type="primary">Vom1r93</name>
    <name type="synonym">V1rb5</name>
</gene>
<protein>
    <recommendedName>
        <fullName>Vomeronasal type-1 receptor 93</fullName>
    </recommendedName>
    <alternativeName>
        <fullName>M21 pheromone receptor</fullName>
    </alternativeName>
    <alternativeName>
        <fullName>Pheromone receptor VN4</fullName>
    </alternativeName>
    <alternativeName>
        <fullName>Vomeronasal receptor 4</fullName>
    </alternativeName>
    <alternativeName>
        <fullName>Vomeronasal type-1 receptor B5</fullName>
    </alternativeName>
    <alternativeName>
        <fullName>mV1R3</fullName>
    </alternativeName>
</protein>
<organism>
    <name type="scientific">Rattus norvegicus</name>
    <name type="common">Rat</name>
    <dbReference type="NCBI Taxonomy" id="10116"/>
    <lineage>
        <taxon>Eukaryota</taxon>
        <taxon>Metazoa</taxon>
        <taxon>Chordata</taxon>
        <taxon>Craniata</taxon>
        <taxon>Vertebrata</taxon>
        <taxon>Euteleostomi</taxon>
        <taxon>Mammalia</taxon>
        <taxon>Eutheria</taxon>
        <taxon>Euarchontoglires</taxon>
        <taxon>Glires</taxon>
        <taxon>Rodentia</taxon>
        <taxon>Myomorpha</taxon>
        <taxon>Muroidea</taxon>
        <taxon>Muridae</taxon>
        <taxon>Murinae</taxon>
        <taxon>Rattus</taxon>
    </lineage>
</organism>
<reference evidence="5 6" key="1">
    <citation type="journal article" date="1995" name="Cell">
        <title>A novel family of genes encoding putative pheromone receptors in mammals.</title>
        <authorList>
            <person name="Dulac C."/>
            <person name="Axel R."/>
        </authorList>
    </citation>
    <scope>NUCLEOTIDE SEQUENCE [MRNA]</scope>
    <scope>PUTATIVE FUNCTION</scope>
    <scope>TISSUE SPECIFICITY</scope>
    <source>
        <strain evidence="6">Sprague-Dawley</strain>
        <tissue evidence="6">Vomeronasal organ</tissue>
    </source>
</reference>
<reference evidence="7" key="2">
    <citation type="submission" date="1999-06" db="EMBL/GenBank/DDBJ databases">
        <authorList>
            <person name="Mimmack M.L."/>
        </authorList>
    </citation>
    <scope>NUCLEOTIDE SEQUENCE [GENOMIC DNA]</scope>
</reference>
<reference evidence="7" key="3">
    <citation type="submission" date="2003-12" db="EMBL/GenBank/DDBJ databases">
        <title>Rat vomeronasal receptors.</title>
        <authorList>
            <person name="Capello L."/>
            <person name="Rodriguez I."/>
        </authorList>
    </citation>
    <scope>NUCLEOTIDE SEQUENCE [MRNA]</scope>
</reference>
<reference evidence="5" key="4">
    <citation type="journal article" date="1998" name="Brain Res. Mol. Brain Res.">
        <title>Isolation of mouse vomeronasal receptor genes and their co-localization with specific G-protein messenger RNAs.</title>
        <authorList>
            <person name="Saito H."/>
            <person name="Mimmack M.L."/>
            <person name="Keverne E.B."/>
            <person name="Kishimoto J."/>
            <person name="Emson P.C."/>
        </authorList>
    </citation>
    <scope>NUCLEOTIDE SEQUENCE [MRNA] OF 1-245</scope>
</reference>
<comment type="function">
    <text evidence="2 4">Putative pheromone receptor implicated in the regulation of social as well as reproductive behavior.</text>
</comment>
<comment type="subcellular location">
    <subcellularLocation>
        <location evidence="5">Cell membrane</location>
        <topology evidence="3">Multi-pass membrane protein</topology>
    </subcellularLocation>
</comment>
<comment type="tissue specificity">
    <text evidence="4">Expressed in 1-4% of neurons of the vomeronasal organ. Only one pheromone receptor gene may be expressed in a particular neuron. Not expressed in the main olfactory epithelium.</text>
</comment>
<comment type="similarity">
    <text evidence="3">Belongs to the G-protein coupled receptor 1 family.</text>
</comment>
<comment type="caution">
    <text evidence="5">Was originally (Ref.2, PubMed:9757043) thought to originate from mouse.</text>
</comment>
<comment type="sequence caution" evidence="5">
    <conflict type="erroneous initiation">
        <sequence resource="EMBL-CDS" id="AAC52285"/>
    </conflict>
    <text>Extended N-terminus.</text>
</comment>
<evidence type="ECO:0000250" key="1"/>
<evidence type="ECO:0000250" key="2">
    <source>
        <dbReference type="UniProtKB" id="Q8VIC6"/>
    </source>
</evidence>
<evidence type="ECO:0000255" key="3"/>
<evidence type="ECO:0000269" key="4">
    <source>
    </source>
</evidence>
<evidence type="ECO:0000305" key="5"/>
<evidence type="ECO:0000312" key="6">
    <source>
        <dbReference type="EMBL" id="AAC52285.1"/>
    </source>
</evidence>
<evidence type="ECO:0000312" key="7">
    <source>
        <dbReference type="EMBL" id="CAB44235.1"/>
    </source>
</evidence>
<keyword id="KW-1003">Cell membrane</keyword>
<keyword id="KW-1015">Disulfide bond</keyword>
<keyword id="KW-0297">G-protein coupled receptor</keyword>
<keyword id="KW-0325">Glycoprotein</keyword>
<keyword id="KW-0472">Membrane</keyword>
<keyword id="KW-0589">Pheromone response</keyword>
<keyword id="KW-0675">Receptor</keyword>
<keyword id="KW-1185">Reference proteome</keyword>
<keyword id="KW-0807">Transducer</keyword>
<keyword id="KW-0812">Transmembrane</keyword>
<keyword id="KW-1133">Transmembrane helix</keyword>
<dbReference type="EMBL" id="U36896">
    <property type="protein sequence ID" value="AAC52285.1"/>
    <property type="status" value="ALT_INIT"/>
    <property type="molecule type" value="mRNA"/>
</dbReference>
<dbReference type="EMBL" id="Y17566">
    <property type="protein sequence ID" value="CAB44235.1"/>
    <property type="molecule type" value="Genomic_DNA"/>
</dbReference>
<dbReference type="EMBL" id="AY510293">
    <property type="protein sequence ID" value="AAR87960.1"/>
    <property type="molecule type" value="mRNA"/>
</dbReference>
<dbReference type="PIR" id="I61746">
    <property type="entry name" value="I61746"/>
</dbReference>
<dbReference type="RefSeq" id="NP_001008971.1">
    <property type="nucleotide sequence ID" value="NM_001008971.1"/>
</dbReference>
<dbReference type="SMR" id="Q5J3L7"/>
<dbReference type="STRING" id="10116.ENSRNOP00000074738"/>
<dbReference type="GlyCosmos" id="Q5J3L7">
    <property type="glycosylation" value="1 site, No reported glycans"/>
</dbReference>
<dbReference type="GlyGen" id="Q5J3L7">
    <property type="glycosylation" value="1 site"/>
</dbReference>
<dbReference type="PaxDb" id="10116-ENSRNOP00000023850"/>
<dbReference type="GeneID" id="497787"/>
<dbReference type="KEGG" id="rno:497787"/>
<dbReference type="UCSC" id="RGD:1549740">
    <property type="organism name" value="rat"/>
</dbReference>
<dbReference type="AGR" id="RGD:1549740"/>
<dbReference type="RGD" id="1549740">
    <property type="gene designation" value="Vom1r93"/>
</dbReference>
<dbReference type="eggNOG" id="ENOG502SNRJ">
    <property type="taxonomic scope" value="Eukaryota"/>
</dbReference>
<dbReference type="HOGENOM" id="CLU_058641_0_0_1"/>
<dbReference type="InParanoid" id="Q5J3L7"/>
<dbReference type="PhylomeDB" id="Q5J3L7"/>
<dbReference type="PRO" id="PR:Q5J3L7"/>
<dbReference type="Proteomes" id="UP000002494">
    <property type="component" value="Chromosome 4"/>
</dbReference>
<dbReference type="GO" id="GO:0005886">
    <property type="term" value="C:plasma membrane"/>
    <property type="evidence" value="ECO:0007669"/>
    <property type="project" value="UniProtKB-SubCell"/>
</dbReference>
<dbReference type="GO" id="GO:0016503">
    <property type="term" value="F:pheromone receptor activity"/>
    <property type="evidence" value="ECO:0007669"/>
    <property type="project" value="InterPro"/>
</dbReference>
<dbReference type="GO" id="GO:0019236">
    <property type="term" value="P:response to pheromone"/>
    <property type="evidence" value="ECO:0007669"/>
    <property type="project" value="UniProtKB-KW"/>
</dbReference>
<dbReference type="CDD" id="cd13949">
    <property type="entry name" value="7tm_V1R_pheromone"/>
    <property type="match status" value="1"/>
</dbReference>
<dbReference type="FunFam" id="1.20.1070.10:FF:000051">
    <property type="entry name" value="Vomeronasal type-1 receptor"/>
    <property type="match status" value="1"/>
</dbReference>
<dbReference type="Gene3D" id="1.20.1070.10">
    <property type="entry name" value="Rhodopsin 7-helix transmembrane proteins"/>
    <property type="match status" value="1"/>
</dbReference>
<dbReference type="InterPro" id="IPR004072">
    <property type="entry name" value="Vmron_rcpt_1"/>
</dbReference>
<dbReference type="PANTHER" id="PTHR24062">
    <property type="entry name" value="VOMERONASAL TYPE-1 RECEPTOR"/>
    <property type="match status" value="1"/>
</dbReference>
<dbReference type="Pfam" id="PF03402">
    <property type="entry name" value="V1R"/>
    <property type="match status" value="1"/>
</dbReference>
<dbReference type="PRINTS" id="PR01534">
    <property type="entry name" value="VOMERONASL1R"/>
</dbReference>
<dbReference type="SUPFAM" id="SSF81321">
    <property type="entry name" value="Family A G protein-coupled receptor-like"/>
    <property type="match status" value="1"/>
</dbReference>
<proteinExistence type="evidence at transcript level"/>
<feature type="chain" id="PRO_0000239977" description="Vomeronasal type-1 receptor 93">
    <location>
        <begin position="1"/>
        <end position="310"/>
    </location>
</feature>
<feature type="topological domain" description="Extracellular" evidence="3">
    <location>
        <begin position="1"/>
        <end position="20"/>
    </location>
</feature>
<feature type="transmembrane region" description="Helical; Name=1" evidence="3">
    <location>
        <begin position="21"/>
        <end position="41"/>
    </location>
</feature>
<feature type="topological domain" description="Cytoplasmic" evidence="3">
    <location>
        <begin position="42"/>
        <end position="59"/>
    </location>
</feature>
<feature type="transmembrane region" description="Helical; Name=2" evidence="3">
    <location>
        <begin position="60"/>
        <end position="80"/>
    </location>
</feature>
<feature type="topological domain" description="Extracellular" evidence="3">
    <location>
        <begin position="81"/>
        <end position="93"/>
    </location>
</feature>
<feature type="transmembrane region" description="Helical; Name=3" evidence="3">
    <location>
        <begin position="94"/>
        <end position="114"/>
    </location>
</feature>
<feature type="topological domain" description="Cytoplasmic" evidence="3">
    <location>
        <begin position="115"/>
        <end position="134"/>
    </location>
</feature>
<feature type="transmembrane region" description="Helical; Name=4" evidence="3">
    <location>
        <begin position="135"/>
        <end position="155"/>
    </location>
</feature>
<feature type="topological domain" description="Extracellular" evidence="3">
    <location>
        <begin position="156"/>
        <end position="193"/>
    </location>
</feature>
<feature type="transmembrane region" description="Helical; Name=5" evidence="3">
    <location>
        <begin position="194"/>
        <end position="214"/>
    </location>
</feature>
<feature type="topological domain" description="Cytoplasmic" evidence="3">
    <location>
        <begin position="215"/>
        <end position="238"/>
    </location>
</feature>
<feature type="transmembrane region" description="Helical; Name=6" evidence="3">
    <location>
        <begin position="239"/>
        <end position="259"/>
    </location>
</feature>
<feature type="topological domain" description="Extracellular" evidence="3">
    <location>
        <begin position="260"/>
        <end position="269"/>
    </location>
</feature>
<feature type="transmembrane region" description="Helical; Name=7" evidence="3">
    <location>
        <begin position="270"/>
        <end position="290"/>
    </location>
</feature>
<feature type="topological domain" description="Cytoplasmic" evidence="3">
    <location>
        <begin position="291"/>
        <end position="310"/>
    </location>
</feature>
<feature type="glycosylation site" description="N-linked (GlcNAc...) asparagine" evidence="3">
    <location>
        <position position="159"/>
    </location>
</feature>
<feature type="disulfide bond" evidence="1">
    <location>
        <begin position="85"/>
        <end position="172"/>
    </location>
</feature>
<feature type="sequence conflict" description="In Ref. 1; AAC52285." evidence="5" ref="1">
    <original>A</original>
    <variation>G</variation>
    <location>
        <position position="34"/>
    </location>
</feature>
<feature type="sequence conflict" description="In Ref. 1; AAC52285." evidence="5" ref="1">
    <original>R</original>
    <variation>C</variation>
    <location>
        <position position="120"/>
    </location>
</feature>
<feature type="sequence conflict" description="In Ref. 1; AAC52285." evidence="5" ref="1">
    <original>A</original>
    <variation>S</variation>
    <location>
        <position position="230"/>
    </location>
</feature>
<feature type="sequence conflict" description="In Ref. 1; AAC52285." evidence="5" ref="1">
    <original>T</original>
    <variation>A</variation>
    <location>
        <position position="305"/>
    </location>
</feature>
<feature type="sequence conflict" description="In Ref. 1; AAC52285." evidence="5" ref="1">
    <original>I</original>
    <variation>N</variation>
    <location>
        <position position="310"/>
    </location>
</feature>
<name>V1R93_RAT</name>